<sequence length="499" mass="53082">MSDGEDHETANADDRDETVVRRDRFAGGPARSFLSSLSDDERIFAADLAVDRAHVVMLAEREIIDRETAGDVLAALADVEDAGHDALPDGEDVHEAIESAVIERVGPDGGKMHTARSRNDEVAACIRYRLREDILDLIETVVGAREQLIEVARAEDGTVMPGYTHLQPAQPTTVAHWVLSYEQALQRDTGRLLDAYERVNQNPLGSAAFAGTPFDVDRERTAALLGFDSVAENSMDASATRDFLVETTSAVATLATTLSGLAEDVVVMASKGHVALDDDYASTSSIMPQKKNPDTLELVRGRTGDAVAGLNGLLTNLKGQPRAYNRDLQRAGRHAWDAIDSVTESVEVAAGAVATADWPAETLEVAATDGFATATGVADLLAMAGVPFRTAHEVVAEAAAGLGPEEDAPDYEALSGLAEDVLGEPLSTYVDRDALEAALDPTESVAMRDSRGGPAPDAVAEQVSVAVDALAADREVLADRRQAVSQAADRRQTEVDRYV</sequence>
<feature type="chain" id="PRO_0000137859" description="Argininosuccinate lyase">
    <location>
        <begin position="1"/>
        <end position="499"/>
    </location>
</feature>
<feature type="region of interest" description="Disordered" evidence="2">
    <location>
        <begin position="1"/>
        <end position="22"/>
    </location>
</feature>
<feature type="compositionally biased region" description="Basic and acidic residues" evidence="2">
    <location>
        <begin position="7"/>
        <end position="22"/>
    </location>
</feature>
<reference key="1">
    <citation type="journal article" date="2004" name="Genome Res.">
        <title>Genome sequence of Haloarcula marismortui: a halophilic archaeon from the Dead Sea.</title>
        <authorList>
            <person name="Baliga N.S."/>
            <person name="Bonneau R."/>
            <person name="Facciotti M.T."/>
            <person name="Pan M."/>
            <person name="Glusman G."/>
            <person name="Deutsch E.W."/>
            <person name="Shannon P."/>
            <person name="Chiu Y."/>
            <person name="Weng R.S."/>
            <person name="Gan R.R."/>
            <person name="Hung P."/>
            <person name="Date S.V."/>
            <person name="Marcotte E."/>
            <person name="Hood L."/>
            <person name="Ng W.V."/>
        </authorList>
    </citation>
    <scope>NUCLEOTIDE SEQUENCE [LARGE SCALE GENOMIC DNA]</scope>
    <source>
        <strain>ATCC 43049 / DSM 3752 / JCM 8966 / VKM B-1809</strain>
    </source>
</reference>
<keyword id="KW-0028">Amino-acid biosynthesis</keyword>
<keyword id="KW-0055">Arginine biosynthesis</keyword>
<keyword id="KW-0963">Cytoplasm</keyword>
<keyword id="KW-0456">Lyase</keyword>
<keyword id="KW-1185">Reference proteome</keyword>
<protein>
    <recommendedName>
        <fullName evidence="1">Argininosuccinate lyase</fullName>
        <shortName evidence="1">ASAL</shortName>
        <ecNumber evidence="1">4.3.2.1</ecNumber>
    </recommendedName>
    <alternativeName>
        <fullName evidence="1">Arginosuccinase</fullName>
    </alternativeName>
</protein>
<gene>
    <name evidence="1" type="primary">argH</name>
    <name type="ordered locus">rrnAC2681</name>
</gene>
<organism>
    <name type="scientific">Haloarcula marismortui (strain ATCC 43049 / DSM 3752 / JCM 8966 / VKM B-1809)</name>
    <name type="common">Halobacterium marismortui</name>
    <dbReference type="NCBI Taxonomy" id="272569"/>
    <lineage>
        <taxon>Archaea</taxon>
        <taxon>Methanobacteriati</taxon>
        <taxon>Methanobacteriota</taxon>
        <taxon>Stenosarchaea group</taxon>
        <taxon>Halobacteria</taxon>
        <taxon>Halobacteriales</taxon>
        <taxon>Haloarculaceae</taxon>
        <taxon>Haloarcula</taxon>
    </lineage>
</organism>
<comment type="catalytic activity">
    <reaction evidence="1">
        <text>2-(N(omega)-L-arginino)succinate = fumarate + L-arginine</text>
        <dbReference type="Rhea" id="RHEA:24020"/>
        <dbReference type="ChEBI" id="CHEBI:29806"/>
        <dbReference type="ChEBI" id="CHEBI:32682"/>
        <dbReference type="ChEBI" id="CHEBI:57472"/>
        <dbReference type="EC" id="4.3.2.1"/>
    </reaction>
</comment>
<comment type="pathway">
    <text evidence="1">Amino-acid biosynthesis; L-arginine biosynthesis; L-arginine from L-ornithine and carbamoyl phosphate: step 3/3.</text>
</comment>
<comment type="subcellular location">
    <subcellularLocation>
        <location evidence="1">Cytoplasm</location>
    </subcellularLocation>
</comment>
<comment type="similarity">
    <text evidence="1">Belongs to the lyase 1 family. Argininosuccinate lyase subfamily.</text>
</comment>
<accession>Q5UZ47</accession>
<dbReference type="EC" id="4.3.2.1" evidence="1"/>
<dbReference type="EMBL" id="AY596297">
    <property type="protein sequence ID" value="AAV47456.1"/>
    <property type="molecule type" value="Genomic_DNA"/>
</dbReference>
<dbReference type="RefSeq" id="WP_011224369.1">
    <property type="nucleotide sequence ID" value="NC_006396.1"/>
</dbReference>
<dbReference type="SMR" id="Q5UZ47"/>
<dbReference type="STRING" id="272569.rrnAC2681"/>
<dbReference type="PaxDb" id="272569-rrnAC2681"/>
<dbReference type="EnsemblBacteria" id="AAV47456">
    <property type="protein sequence ID" value="AAV47456"/>
    <property type="gene ID" value="rrnAC2681"/>
</dbReference>
<dbReference type="GeneID" id="40153552"/>
<dbReference type="KEGG" id="hma:rrnAC2681"/>
<dbReference type="PATRIC" id="fig|272569.17.peg.3271"/>
<dbReference type="eggNOG" id="arCOG01748">
    <property type="taxonomic scope" value="Archaea"/>
</dbReference>
<dbReference type="HOGENOM" id="CLU_027272_2_3_2"/>
<dbReference type="UniPathway" id="UPA00068">
    <property type="reaction ID" value="UER00114"/>
</dbReference>
<dbReference type="Proteomes" id="UP000001169">
    <property type="component" value="Chromosome I"/>
</dbReference>
<dbReference type="GO" id="GO:0005829">
    <property type="term" value="C:cytosol"/>
    <property type="evidence" value="ECO:0007669"/>
    <property type="project" value="TreeGrafter"/>
</dbReference>
<dbReference type="GO" id="GO:0004056">
    <property type="term" value="F:argininosuccinate lyase activity"/>
    <property type="evidence" value="ECO:0007669"/>
    <property type="project" value="UniProtKB-UniRule"/>
</dbReference>
<dbReference type="GO" id="GO:0042450">
    <property type="term" value="P:arginine biosynthetic process via ornithine"/>
    <property type="evidence" value="ECO:0007669"/>
    <property type="project" value="InterPro"/>
</dbReference>
<dbReference type="GO" id="GO:0006526">
    <property type="term" value="P:L-arginine biosynthetic process"/>
    <property type="evidence" value="ECO:0007669"/>
    <property type="project" value="UniProtKB-UniRule"/>
</dbReference>
<dbReference type="CDD" id="cd01359">
    <property type="entry name" value="Argininosuccinate_lyase"/>
    <property type="match status" value="1"/>
</dbReference>
<dbReference type="Gene3D" id="1.10.40.30">
    <property type="entry name" value="Fumarase/aspartase (C-terminal domain)"/>
    <property type="match status" value="1"/>
</dbReference>
<dbReference type="Gene3D" id="1.20.200.10">
    <property type="entry name" value="Fumarase/aspartase (Central domain)"/>
    <property type="match status" value="1"/>
</dbReference>
<dbReference type="Gene3D" id="1.10.275.10">
    <property type="entry name" value="Fumarase/aspartase (N-terminal domain)"/>
    <property type="match status" value="1"/>
</dbReference>
<dbReference type="HAMAP" id="MF_00006">
    <property type="entry name" value="Arg_succ_lyase"/>
    <property type="match status" value="1"/>
</dbReference>
<dbReference type="InterPro" id="IPR029419">
    <property type="entry name" value="Arg_succ_lyase_C"/>
</dbReference>
<dbReference type="InterPro" id="IPR009049">
    <property type="entry name" value="Argininosuccinate_lyase"/>
</dbReference>
<dbReference type="InterPro" id="IPR024083">
    <property type="entry name" value="Fumarase/histidase_N"/>
</dbReference>
<dbReference type="InterPro" id="IPR000362">
    <property type="entry name" value="Fumarate_lyase_fam"/>
</dbReference>
<dbReference type="InterPro" id="IPR022761">
    <property type="entry name" value="Fumarate_lyase_N"/>
</dbReference>
<dbReference type="InterPro" id="IPR008948">
    <property type="entry name" value="L-Aspartase-like"/>
</dbReference>
<dbReference type="NCBIfam" id="TIGR00838">
    <property type="entry name" value="argH"/>
    <property type="match status" value="1"/>
</dbReference>
<dbReference type="PANTHER" id="PTHR43814">
    <property type="entry name" value="ARGININOSUCCINATE LYASE"/>
    <property type="match status" value="1"/>
</dbReference>
<dbReference type="PANTHER" id="PTHR43814:SF1">
    <property type="entry name" value="ARGININOSUCCINATE LYASE"/>
    <property type="match status" value="1"/>
</dbReference>
<dbReference type="Pfam" id="PF14698">
    <property type="entry name" value="ASL_C2"/>
    <property type="match status" value="1"/>
</dbReference>
<dbReference type="Pfam" id="PF00206">
    <property type="entry name" value="Lyase_1"/>
    <property type="match status" value="1"/>
</dbReference>
<dbReference type="PRINTS" id="PR00145">
    <property type="entry name" value="ARGSUCLYASE"/>
</dbReference>
<dbReference type="PRINTS" id="PR00149">
    <property type="entry name" value="FUMRATELYASE"/>
</dbReference>
<dbReference type="SUPFAM" id="SSF48557">
    <property type="entry name" value="L-aspartase-like"/>
    <property type="match status" value="1"/>
</dbReference>
<evidence type="ECO:0000255" key="1">
    <source>
        <dbReference type="HAMAP-Rule" id="MF_00006"/>
    </source>
</evidence>
<evidence type="ECO:0000256" key="2">
    <source>
        <dbReference type="SAM" id="MobiDB-lite"/>
    </source>
</evidence>
<name>ARLY_HALMA</name>
<proteinExistence type="inferred from homology"/>